<geneLocation type="chloroplast"/>
<feature type="propeptide" id="PRO_0000031367" evidence="1">
    <location>
        <begin position="1"/>
        <end position="2"/>
    </location>
</feature>
<feature type="chain" id="PRO_0000031368" description="Ribulose bisphosphate carboxylase large chain">
    <location>
        <begin position="3"/>
        <end position="475"/>
    </location>
</feature>
<feature type="active site" description="Proton acceptor" evidence="1">
    <location>
        <position position="175"/>
    </location>
</feature>
<feature type="active site" description="Proton acceptor" evidence="1">
    <location>
        <position position="294"/>
    </location>
</feature>
<feature type="binding site" description="in homodimeric partner" evidence="1">
    <location>
        <position position="123"/>
    </location>
    <ligand>
        <name>substrate</name>
    </ligand>
</feature>
<feature type="binding site" evidence="1">
    <location>
        <position position="173"/>
    </location>
    <ligand>
        <name>substrate</name>
    </ligand>
</feature>
<feature type="binding site" evidence="1">
    <location>
        <position position="177"/>
    </location>
    <ligand>
        <name>substrate</name>
    </ligand>
</feature>
<feature type="binding site" description="via carbamate group" evidence="1">
    <location>
        <position position="201"/>
    </location>
    <ligand>
        <name>Mg(2+)</name>
        <dbReference type="ChEBI" id="CHEBI:18420"/>
    </ligand>
</feature>
<feature type="binding site" evidence="1">
    <location>
        <position position="203"/>
    </location>
    <ligand>
        <name>Mg(2+)</name>
        <dbReference type="ChEBI" id="CHEBI:18420"/>
    </ligand>
</feature>
<feature type="binding site" evidence="1">
    <location>
        <position position="204"/>
    </location>
    <ligand>
        <name>Mg(2+)</name>
        <dbReference type="ChEBI" id="CHEBI:18420"/>
    </ligand>
</feature>
<feature type="binding site" evidence="1">
    <location>
        <position position="295"/>
    </location>
    <ligand>
        <name>substrate</name>
    </ligand>
</feature>
<feature type="binding site" evidence="1">
    <location>
        <position position="327"/>
    </location>
    <ligand>
        <name>substrate</name>
    </ligand>
</feature>
<feature type="binding site" evidence="1">
    <location>
        <position position="379"/>
    </location>
    <ligand>
        <name>substrate</name>
    </ligand>
</feature>
<feature type="site" description="Transition state stabilizer" evidence="1">
    <location>
        <position position="334"/>
    </location>
</feature>
<feature type="modified residue" description="N-acetylproline" evidence="1">
    <location>
        <position position="3"/>
    </location>
</feature>
<feature type="modified residue" description="N6,N6,N6-trimethyllysine" evidence="1">
    <location>
        <position position="14"/>
    </location>
</feature>
<feature type="modified residue" description="N6-carboxylysine" evidence="1">
    <location>
        <position position="201"/>
    </location>
</feature>
<feature type="disulfide bond" description="Interchain; in linked form" evidence="1">
    <location>
        <position position="247"/>
    </location>
</feature>
<proteinExistence type="inferred from homology"/>
<gene>
    <name evidence="1" type="primary">rbcL</name>
</gene>
<reference key="1">
    <citation type="journal article" date="1992" name="Proc. Natl. Acad. Sci. U.S.A.">
        <title>Extensive variation in evolutionary rate of rbcL gene sequences among seed plants.</title>
        <authorList>
            <person name="Bousquet J."/>
            <person name="Strauss S.H."/>
            <person name="Doerksen A.H."/>
            <person name="Price R.A."/>
        </authorList>
    </citation>
    <scope>NUCLEOTIDE SEQUENCE [GENOMIC DNA]</scope>
</reference>
<accession>P24679</accession>
<evidence type="ECO:0000255" key="1">
    <source>
        <dbReference type="HAMAP-Rule" id="MF_01338"/>
    </source>
</evidence>
<comment type="function">
    <text evidence="1">RuBisCO catalyzes two reactions: the carboxylation of D-ribulose 1,5-bisphosphate, the primary event in carbon dioxide fixation, as well as the oxidative fragmentation of the pentose substrate in the photorespiration process. Both reactions occur simultaneously and in competition at the same active site.</text>
</comment>
<comment type="catalytic activity">
    <reaction evidence="1">
        <text>2 (2R)-3-phosphoglycerate + 2 H(+) = D-ribulose 1,5-bisphosphate + CO2 + H2O</text>
        <dbReference type="Rhea" id="RHEA:23124"/>
        <dbReference type="ChEBI" id="CHEBI:15377"/>
        <dbReference type="ChEBI" id="CHEBI:15378"/>
        <dbReference type="ChEBI" id="CHEBI:16526"/>
        <dbReference type="ChEBI" id="CHEBI:57870"/>
        <dbReference type="ChEBI" id="CHEBI:58272"/>
        <dbReference type="EC" id="4.1.1.39"/>
    </reaction>
</comment>
<comment type="catalytic activity">
    <reaction evidence="1">
        <text>D-ribulose 1,5-bisphosphate + O2 = 2-phosphoglycolate + (2R)-3-phosphoglycerate + 2 H(+)</text>
        <dbReference type="Rhea" id="RHEA:36631"/>
        <dbReference type="ChEBI" id="CHEBI:15378"/>
        <dbReference type="ChEBI" id="CHEBI:15379"/>
        <dbReference type="ChEBI" id="CHEBI:57870"/>
        <dbReference type="ChEBI" id="CHEBI:58033"/>
        <dbReference type="ChEBI" id="CHEBI:58272"/>
    </reaction>
</comment>
<comment type="cofactor">
    <cofactor evidence="1">
        <name>Mg(2+)</name>
        <dbReference type="ChEBI" id="CHEBI:18420"/>
    </cofactor>
    <text evidence="1">Binds 1 Mg(2+) ion per subunit.</text>
</comment>
<comment type="subunit">
    <text evidence="1">Heterohexadecamer of 8 large chains and 8 small chains; disulfide-linked. The disulfide link is formed within the large subunit homodimers.</text>
</comment>
<comment type="subcellular location">
    <subcellularLocation>
        <location>Plastid</location>
        <location>Chloroplast</location>
    </subcellularLocation>
</comment>
<comment type="PTM">
    <text evidence="1">The disulfide bond which can form in the large chain dimeric partners within the hexadecamer appears to be associated with oxidative stress and protein turnover.</text>
</comment>
<comment type="miscellaneous">
    <text evidence="1">The basic functional RuBisCO is composed of a large chain homodimer in a 'head-to-tail' conformation. In form I RuBisCO this homodimer is arranged in a barrel-like tetramer with the small subunits forming a tetrameric 'cap' on each end of the 'barrel'.</text>
</comment>
<comment type="similarity">
    <text evidence="1">Belongs to the RuBisCO large chain family. Type I subfamily.</text>
</comment>
<dbReference type="EC" id="4.1.1.39" evidence="1"/>
<dbReference type="EMBL" id="X58134">
    <property type="protein sequence ID" value="CAA41142.1"/>
    <property type="molecule type" value="Genomic_DNA"/>
</dbReference>
<dbReference type="PIR" id="F46161">
    <property type="entry name" value="RKSZLM"/>
</dbReference>
<dbReference type="SMR" id="P24679"/>
<dbReference type="GO" id="GO:0009507">
    <property type="term" value="C:chloroplast"/>
    <property type="evidence" value="ECO:0007669"/>
    <property type="project" value="UniProtKB-SubCell"/>
</dbReference>
<dbReference type="GO" id="GO:0000287">
    <property type="term" value="F:magnesium ion binding"/>
    <property type="evidence" value="ECO:0007669"/>
    <property type="project" value="UniProtKB-UniRule"/>
</dbReference>
<dbReference type="GO" id="GO:0004497">
    <property type="term" value="F:monooxygenase activity"/>
    <property type="evidence" value="ECO:0007669"/>
    <property type="project" value="UniProtKB-KW"/>
</dbReference>
<dbReference type="GO" id="GO:0016984">
    <property type="term" value="F:ribulose-bisphosphate carboxylase activity"/>
    <property type="evidence" value="ECO:0007669"/>
    <property type="project" value="UniProtKB-UniRule"/>
</dbReference>
<dbReference type="GO" id="GO:0009853">
    <property type="term" value="P:photorespiration"/>
    <property type="evidence" value="ECO:0007669"/>
    <property type="project" value="UniProtKB-KW"/>
</dbReference>
<dbReference type="GO" id="GO:0019253">
    <property type="term" value="P:reductive pentose-phosphate cycle"/>
    <property type="evidence" value="ECO:0007669"/>
    <property type="project" value="UniProtKB-UniRule"/>
</dbReference>
<dbReference type="CDD" id="cd08212">
    <property type="entry name" value="RuBisCO_large_I"/>
    <property type="match status" value="1"/>
</dbReference>
<dbReference type="FunFam" id="3.20.20.110:FF:000001">
    <property type="entry name" value="Ribulose bisphosphate carboxylase large chain"/>
    <property type="match status" value="1"/>
</dbReference>
<dbReference type="FunFam" id="3.30.70.150:FF:000001">
    <property type="entry name" value="Ribulose bisphosphate carboxylase large chain"/>
    <property type="match status" value="1"/>
</dbReference>
<dbReference type="Gene3D" id="3.20.20.110">
    <property type="entry name" value="Ribulose bisphosphate carboxylase, large subunit, C-terminal domain"/>
    <property type="match status" value="1"/>
</dbReference>
<dbReference type="Gene3D" id="3.30.70.150">
    <property type="entry name" value="RuBisCO large subunit, N-terminal domain"/>
    <property type="match status" value="1"/>
</dbReference>
<dbReference type="HAMAP" id="MF_01338">
    <property type="entry name" value="RuBisCO_L_type1"/>
    <property type="match status" value="1"/>
</dbReference>
<dbReference type="InterPro" id="IPR033966">
    <property type="entry name" value="RuBisCO"/>
</dbReference>
<dbReference type="InterPro" id="IPR020878">
    <property type="entry name" value="RuBisCo_large_chain_AS"/>
</dbReference>
<dbReference type="InterPro" id="IPR000685">
    <property type="entry name" value="RuBisCO_lsu_C"/>
</dbReference>
<dbReference type="InterPro" id="IPR036376">
    <property type="entry name" value="RuBisCO_lsu_C_sf"/>
</dbReference>
<dbReference type="InterPro" id="IPR017443">
    <property type="entry name" value="RuBisCO_lsu_fd_N"/>
</dbReference>
<dbReference type="InterPro" id="IPR036422">
    <property type="entry name" value="RuBisCO_lsu_N_sf"/>
</dbReference>
<dbReference type="InterPro" id="IPR020888">
    <property type="entry name" value="RuBisCO_lsuI"/>
</dbReference>
<dbReference type="NCBIfam" id="NF003252">
    <property type="entry name" value="PRK04208.1"/>
    <property type="match status" value="1"/>
</dbReference>
<dbReference type="PANTHER" id="PTHR42704">
    <property type="entry name" value="RIBULOSE BISPHOSPHATE CARBOXYLASE"/>
    <property type="match status" value="1"/>
</dbReference>
<dbReference type="PANTHER" id="PTHR42704:SF15">
    <property type="entry name" value="RIBULOSE BISPHOSPHATE CARBOXYLASE LARGE CHAIN"/>
    <property type="match status" value="1"/>
</dbReference>
<dbReference type="Pfam" id="PF00016">
    <property type="entry name" value="RuBisCO_large"/>
    <property type="match status" value="1"/>
</dbReference>
<dbReference type="Pfam" id="PF02788">
    <property type="entry name" value="RuBisCO_large_N"/>
    <property type="match status" value="1"/>
</dbReference>
<dbReference type="SFLD" id="SFLDG01052">
    <property type="entry name" value="RuBisCO"/>
    <property type="match status" value="1"/>
</dbReference>
<dbReference type="SFLD" id="SFLDS00014">
    <property type="entry name" value="RuBisCO"/>
    <property type="match status" value="1"/>
</dbReference>
<dbReference type="SFLD" id="SFLDG00301">
    <property type="entry name" value="RuBisCO-like_proteins"/>
    <property type="match status" value="1"/>
</dbReference>
<dbReference type="SUPFAM" id="SSF51649">
    <property type="entry name" value="RuBisCo, C-terminal domain"/>
    <property type="match status" value="1"/>
</dbReference>
<dbReference type="SUPFAM" id="SSF54966">
    <property type="entry name" value="RuBisCO, large subunit, small (N-terminal) domain"/>
    <property type="match status" value="1"/>
</dbReference>
<dbReference type="PROSITE" id="PS00157">
    <property type="entry name" value="RUBISCO_LARGE"/>
    <property type="match status" value="1"/>
</dbReference>
<sequence>MSPKTETKASVGFKAGVKDYRLTYYTPEYQTKDTDILAAFRVTPQPGVPPEEAGAAVAAESSTGTWTTVWTDGLTSLDRYKGRCYDIEPVAGEETQFIAYVAYPLDLFEEGSVTNLFTSIVGNVFGFKALRALRLEDLRIPPAYSKTFQGPPHGIQVERDKLNKYGRPLLGCTIKPKLGLSAKNYGRAVYECLRGGLDFTKDDENVNSQPFMRWRDRFVFCAEAIYKAQAETGEIKGHYLNATAGTCEEMMKRAIFARELGVPIVMHDYLTGGFTANTSLAHYCRDNGLLLHIHRAMHAVIDRQRIHGMHFRVLAKALRMSGGDHIHAGTVVGKLEGERDVTLGFVDLLRDDFIEKDRSRGIYFTQDWVSMPGVLPVASGGIHVWHMPALTEIFGDDSVLQFGGGTLGHPWGNAPGAVANRVALEACVQARNEGRDLAREGNEVIREACKWSPELAAACEIWKEIKFEFDVIDRL</sequence>
<protein>
    <recommendedName>
        <fullName evidence="1">Ribulose bisphosphate carboxylase large chain</fullName>
        <shortName evidence="1">RuBisCO large subunit</shortName>
        <ecNumber evidence="1">4.1.1.39</ecNumber>
    </recommendedName>
</protein>
<organism>
    <name type="scientific">Pinus radiata</name>
    <name type="common">Monterey pine</name>
    <name type="synonym">Pinus insignis</name>
    <dbReference type="NCBI Taxonomy" id="3347"/>
    <lineage>
        <taxon>Eukaryota</taxon>
        <taxon>Viridiplantae</taxon>
        <taxon>Streptophyta</taxon>
        <taxon>Embryophyta</taxon>
        <taxon>Tracheophyta</taxon>
        <taxon>Spermatophyta</taxon>
        <taxon>Pinopsida</taxon>
        <taxon>Pinidae</taxon>
        <taxon>Conifers I</taxon>
        <taxon>Pinales</taxon>
        <taxon>Pinaceae</taxon>
        <taxon>Pinus</taxon>
        <taxon>Pinus subgen. Pinus</taxon>
    </lineage>
</organism>
<keyword id="KW-0007">Acetylation</keyword>
<keyword id="KW-0113">Calvin cycle</keyword>
<keyword id="KW-0120">Carbon dioxide fixation</keyword>
<keyword id="KW-0150">Chloroplast</keyword>
<keyword id="KW-1015">Disulfide bond</keyword>
<keyword id="KW-0456">Lyase</keyword>
<keyword id="KW-0460">Magnesium</keyword>
<keyword id="KW-0479">Metal-binding</keyword>
<keyword id="KW-0488">Methylation</keyword>
<keyword id="KW-0503">Monooxygenase</keyword>
<keyword id="KW-0560">Oxidoreductase</keyword>
<keyword id="KW-0601">Photorespiration</keyword>
<keyword id="KW-0602">Photosynthesis</keyword>
<keyword id="KW-0934">Plastid</keyword>
<name>RBL_PINRA</name>